<organism>
    <name type="scientific">Bos taurus</name>
    <name type="common">Bovine</name>
    <dbReference type="NCBI Taxonomy" id="9913"/>
    <lineage>
        <taxon>Eukaryota</taxon>
        <taxon>Metazoa</taxon>
        <taxon>Chordata</taxon>
        <taxon>Craniata</taxon>
        <taxon>Vertebrata</taxon>
        <taxon>Euteleostomi</taxon>
        <taxon>Mammalia</taxon>
        <taxon>Eutheria</taxon>
        <taxon>Laurasiatheria</taxon>
        <taxon>Artiodactyla</taxon>
        <taxon>Ruminantia</taxon>
        <taxon>Pecora</taxon>
        <taxon>Bovidae</taxon>
        <taxon>Bovinae</taxon>
        <taxon>Bos</taxon>
    </lineage>
</organism>
<dbReference type="EMBL" id="BT020913">
    <property type="protein sequence ID" value="AAX08930.1"/>
    <property type="molecule type" value="mRNA"/>
</dbReference>
<dbReference type="RefSeq" id="NP_001015665.1">
    <property type="nucleotide sequence ID" value="NM_001015665.1"/>
</dbReference>
<dbReference type="RefSeq" id="XP_024857451.1">
    <property type="nucleotide sequence ID" value="XM_025001683.2"/>
</dbReference>
<dbReference type="SMR" id="Q5E9K7"/>
<dbReference type="FunCoup" id="Q5E9K7">
    <property type="interactions" value="1929"/>
</dbReference>
<dbReference type="STRING" id="9913.ENSBTAP00000006455"/>
<dbReference type="PaxDb" id="9913-ENSBTAP00000006455"/>
<dbReference type="GeneID" id="538436"/>
<dbReference type="KEGG" id="bta:538436"/>
<dbReference type="CTD" id="9134"/>
<dbReference type="VEuPathDB" id="HostDB:ENSBTAG00000004906"/>
<dbReference type="eggNOG" id="KOG0655">
    <property type="taxonomic scope" value="Eukaryota"/>
</dbReference>
<dbReference type="HOGENOM" id="CLU_020695_8_0_1"/>
<dbReference type="InParanoid" id="Q5E9K7"/>
<dbReference type="OMA" id="WPPTISG"/>
<dbReference type="OrthoDB" id="5590282at2759"/>
<dbReference type="Reactome" id="R-BTA-1538133">
    <property type="pathway name" value="G0 and Early G1"/>
</dbReference>
<dbReference type="Reactome" id="R-BTA-187577">
    <property type="pathway name" value="SCF(Skp2)-mediated degradation of p27/p21"/>
</dbReference>
<dbReference type="Reactome" id="R-BTA-2559586">
    <property type="pathway name" value="DNA Damage/Telomere Stress Induced Senescence"/>
</dbReference>
<dbReference type="Reactome" id="R-BTA-6804116">
    <property type="pathway name" value="TP53 Regulates Transcription of Genes Involved in G1 Cell Cycle Arrest"/>
</dbReference>
<dbReference type="Reactome" id="R-BTA-69017">
    <property type="pathway name" value="CDK-mediated phosphorylation and removal of Cdc6"/>
</dbReference>
<dbReference type="Reactome" id="R-BTA-69200">
    <property type="pathway name" value="Phosphorylation of proteins involved in G1/S transition by active Cyclin E:Cdk2 complexes"/>
</dbReference>
<dbReference type="Reactome" id="R-BTA-69202">
    <property type="pathway name" value="Cyclin E associated events during G1/S transition"/>
</dbReference>
<dbReference type="Reactome" id="R-BTA-69231">
    <property type="pathway name" value="Cyclin D associated events in G1"/>
</dbReference>
<dbReference type="Reactome" id="R-BTA-69563">
    <property type="pathway name" value="p53-Dependent G1 DNA Damage Response"/>
</dbReference>
<dbReference type="Proteomes" id="UP000009136">
    <property type="component" value="Chromosome 14"/>
</dbReference>
<dbReference type="Bgee" id="ENSBTAG00000004906">
    <property type="expression patterns" value="Expressed in pharyngeal tonsil and 104 other cell types or tissues"/>
</dbReference>
<dbReference type="GO" id="GO:0097134">
    <property type="term" value="C:cyclin E1-CDK2 complex"/>
    <property type="evidence" value="ECO:0000318"/>
    <property type="project" value="GO_Central"/>
</dbReference>
<dbReference type="GO" id="GO:0097135">
    <property type="term" value="C:cyclin E2-CDK2 complex"/>
    <property type="evidence" value="ECO:0000318"/>
    <property type="project" value="GO_Central"/>
</dbReference>
<dbReference type="GO" id="GO:0005737">
    <property type="term" value="C:cytoplasm"/>
    <property type="evidence" value="ECO:0000318"/>
    <property type="project" value="GO_Central"/>
</dbReference>
<dbReference type="GO" id="GO:0005815">
    <property type="term" value="C:microtubule organizing center"/>
    <property type="evidence" value="ECO:0000318"/>
    <property type="project" value="GO_Central"/>
</dbReference>
<dbReference type="GO" id="GO:0005634">
    <property type="term" value="C:nucleus"/>
    <property type="evidence" value="ECO:0000318"/>
    <property type="project" value="GO_Central"/>
</dbReference>
<dbReference type="GO" id="GO:0016538">
    <property type="term" value="F:cyclin-dependent protein serine/threonine kinase regulator activity"/>
    <property type="evidence" value="ECO:0000318"/>
    <property type="project" value="GO_Central"/>
</dbReference>
<dbReference type="GO" id="GO:0051301">
    <property type="term" value="P:cell division"/>
    <property type="evidence" value="ECO:0007669"/>
    <property type="project" value="UniProtKB-KW"/>
</dbReference>
<dbReference type="GO" id="GO:0006270">
    <property type="term" value="P:DNA replication initiation"/>
    <property type="evidence" value="ECO:0007669"/>
    <property type="project" value="Ensembl"/>
</dbReference>
<dbReference type="GO" id="GO:0000082">
    <property type="term" value="P:G1/S transition of mitotic cell cycle"/>
    <property type="evidence" value="ECO:0000318"/>
    <property type="project" value="GO_Central"/>
</dbReference>
<dbReference type="GO" id="GO:0007129">
    <property type="term" value="P:homologous chromosome pairing at meiosis"/>
    <property type="evidence" value="ECO:0007669"/>
    <property type="project" value="Ensembl"/>
</dbReference>
<dbReference type="GO" id="GO:1900087">
    <property type="term" value="P:positive regulation of G1/S transition of mitotic cell cycle"/>
    <property type="evidence" value="ECO:0000318"/>
    <property type="project" value="GO_Central"/>
</dbReference>
<dbReference type="GO" id="GO:0032880">
    <property type="term" value="P:regulation of protein localization"/>
    <property type="evidence" value="ECO:0007669"/>
    <property type="project" value="Ensembl"/>
</dbReference>
<dbReference type="GO" id="GO:0000723">
    <property type="term" value="P:telomere maintenance"/>
    <property type="evidence" value="ECO:0007669"/>
    <property type="project" value="Ensembl"/>
</dbReference>
<dbReference type="CDD" id="cd20580">
    <property type="entry name" value="CYCLIN_CCNE2_rpt1"/>
    <property type="match status" value="1"/>
</dbReference>
<dbReference type="CDD" id="cd20582">
    <property type="entry name" value="CYCLIN_CCNE2_rpt2"/>
    <property type="match status" value="1"/>
</dbReference>
<dbReference type="FunFam" id="1.10.472.10:FF:000024">
    <property type="entry name" value="G1/S-specific cyclin-E1"/>
    <property type="match status" value="1"/>
</dbReference>
<dbReference type="Gene3D" id="1.10.472.10">
    <property type="entry name" value="Cyclin-like"/>
    <property type="match status" value="2"/>
</dbReference>
<dbReference type="InterPro" id="IPR039361">
    <property type="entry name" value="Cyclin"/>
</dbReference>
<dbReference type="InterPro" id="IPR013763">
    <property type="entry name" value="Cyclin-like_dom"/>
</dbReference>
<dbReference type="InterPro" id="IPR036915">
    <property type="entry name" value="Cyclin-like_sf"/>
</dbReference>
<dbReference type="InterPro" id="IPR046965">
    <property type="entry name" value="Cyclin_A/B-like"/>
</dbReference>
<dbReference type="InterPro" id="IPR004367">
    <property type="entry name" value="Cyclin_C-dom"/>
</dbReference>
<dbReference type="InterPro" id="IPR006671">
    <property type="entry name" value="Cyclin_N"/>
</dbReference>
<dbReference type="InterPro" id="IPR048258">
    <property type="entry name" value="Cyclins_cyclin-box"/>
</dbReference>
<dbReference type="PANTHER" id="PTHR10177">
    <property type="entry name" value="CYCLINS"/>
    <property type="match status" value="1"/>
</dbReference>
<dbReference type="Pfam" id="PF02984">
    <property type="entry name" value="Cyclin_C"/>
    <property type="match status" value="1"/>
</dbReference>
<dbReference type="Pfam" id="PF00134">
    <property type="entry name" value="Cyclin_N"/>
    <property type="match status" value="1"/>
</dbReference>
<dbReference type="PIRSF" id="PIRSF001771">
    <property type="entry name" value="Cyclin_A_B_D_E"/>
    <property type="match status" value="1"/>
</dbReference>
<dbReference type="SMART" id="SM00385">
    <property type="entry name" value="CYCLIN"/>
    <property type="match status" value="1"/>
</dbReference>
<dbReference type="SMART" id="SM01332">
    <property type="entry name" value="Cyclin_C"/>
    <property type="match status" value="1"/>
</dbReference>
<dbReference type="SUPFAM" id="SSF47954">
    <property type="entry name" value="Cyclin-like"/>
    <property type="match status" value="2"/>
</dbReference>
<dbReference type="PROSITE" id="PS00292">
    <property type="entry name" value="CYCLINS"/>
    <property type="match status" value="1"/>
</dbReference>
<proteinExistence type="evidence at transcript level"/>
<reference key="1">
    <citation type="journal article" date="2005" name="BMC Genomics">
        <title>Characterization of 954 bovine full-CDS cDNA sequences.</title>
        <authorList>
            <person name="Harhay G.P."/>
            <person name="Sonstegard T.S."/>
            <person name="Keele J.W."/>
            <person name="Heaton M.P."/>
            <person name="Clawson M.L."/>
            <person name="Snelling W.M."/>
            <person name="Wiedmann R.T."/>
            <person name="Van Tassell C.P."/>
            <person name="Smith T.P.L."/>
        </authorList>
    </citation>
    <scope>NUCLEOTIDE SEQUENCE [LARGE SCALE MRNA]</scope>
</reference>
<accession>Q5E9K7</accession>
<comment type="function">
    <text evidence="1">Essential for the control of the cell cycle at the late G1 and early S phase.</text>
</comment>
<comment type="subunit">
    <text evidence="1">Interacts with the CDK2 (in vivo) and CDK3 (in vitro) protein kinases to form a serine/threonine kinase holoenzyme complex. The cyclin subunit imparts substrate specificity to the complex.</text>
</comment>
<comment type="subcellular location">
    <subcellularLocation>
        <location evidence="1">Nucleus</location>
    </subcellularLocation>
</comment>
<comment type="PTM">
    <text evidence="1">Phosphorylation by CDK2 triggers its release from CDK2 and degradation via the ubiquitin proteasome pathway.</text>
</comment>
<comment type="PTM">
    <text evidence="1">Lactylated at Lys-348. Delactylated by SIRT3.</text>
</comment>
<comment type="similarity">
    <text evidence="3">Belongs to the cyclin family. Cyclin E subfamily.</text>
</comment>
<gene>
    <name type="primary">CCNE2</name>
</gene>
<evidence type="ECO:0000250" key="1">
    <source>
        <dbReference type="UniProtKB" id="O96020"/>
    </source>
</evidence>
<evidence type="ECO:0000256" key="2">
    <source>
        <dbReference type="SAM" id="MobiDB-lite"/>
    </source>
</evidence>
<evidence type="ECO:0000305" key="3"/>
<protein>
    <recommendedName>
        <fullName>G1/S-specific cyclin-E2</fullName>
    </recommendedName>
</protein>
<keyword id="KW-0131">Cell cycle</keyword>
<keyword id="KW-0132">Cell division</keyword>
<keyword id="KW-0195">Cyclin</keyword>
<keyword id="KW-0539">Nucleus</keyword>
<keyword id="KW-0597">Phosphoprotein</keyword>
<keyword id="KW-1185">Reference proteome</keyword>
<name>CCNE2_BOVIN</name>
<feature type="chain" id="PRO_0000273976" description="G1/S-specific cyclin-E2">
    <location>
        <begin position="1"/>
        <end position="404"/>
    </location>
</feature>
<feature type="region of interest" description="Disordered" evidence="2">
    <location>
        <begin position="1"/>
        <end position="45"/>
    </location>
</feature>
<feature type="compositionally biased region" description="Polar residues" evidence="2">
    <location>
        <begin position="7"/>
        <end position="26"/>
    </location>
</feature>
<feature type="compositionally biased region" description="Basic and acidic residues" evidence="2">
    <location>
        <begin position="35"/>
        <end position="45"/>
    </location>
</feature>
<feature type="modified residue" description="Phosphoserine" evidence="1">
    <location>
        <position position="21"/>
    </location>
</feature>
<feature type="modified residue" description="N6-lactoyllysine" evidence="1">
    <location>
        <position position="348"/>
    </location>
</feature>
<feature type="modified residue" description="Phosphoserine" evidence="1">
    <location>
        <position position="383"/>
    </location>
</feature>
<feature type="modified residue" description="Phosphothreonine" evidence="1">
    <location>
        <position position="392"/>
    </location>
</feature>
<sequence>MSRRSSRLQAKQQPQASQTDSPQEAQIIQAKKRKTAQDVKKRKEEVTKKHQYEIRNCWPPVLSGGISPCIIIETPHKEIGTSDFSRFTNYRFKNLFINPSPLPDLSWGCSQDVWLNMLKKETRYVHDKHFEVLHSELEPQMRSILLDWLLEVCEVYTLHRETFYLAQDFFDRFMLTQKDINKNMLQLIGITSLFIASKLEEIYAPKLQEFAYVTDGACSEEDILRMELAILKALKWELCPVTVISWLNLFLQVDALKDAPKVLLPQYSQEKFIQIAQLLDLCILAIDSLEFQYRILAAAALCHFTSIEVVKKASGLEWDNISECVDWMVPFVSVVKSTSPAKLKIFKKISMEDRHNIQTHTNYLAMLDEVNYVNTFRKEGQLSPVCNGGIMTPPKSTEKPPGKH</sequence>